<protein>
    <recommendedName>
        <fullName evidence="1">ATP-dependent Clp protease ATP-binding subunit ClpX</fullName>
    </recommendedName>
</protein>
<comment type="function">
    <text evidence="1">ATP-dependent specificity component of the Clp protease. It directs the protease to specific substrates. Can perform chaperone functions in the absence of ClpP.</text>
</comment>
<comment type="subunit">
    <text evidence="1">Component of the ClpX-ClpP complex. Forms a hexameric ring that, in the presence of ATP, binds to fourteen ClpP subunits assembled into a disk-like structure with a central cavity, resembling the structure of eukaryotic proteasomes.</text>
</comment>
<comment type="similarity">
    <text evidence="1">Belongs to the ClpX chaperone family.</text>
</comment>
<feature type="chain" id="PRO_1000077154" description="ATP-dependent Clp protease ATP-binding subunit ClpX">
    <location>
        <begin position="1"/>
        <end position="422"/>
    </location>
</feature>
<feature type="domain" description="ClpX-type ZB" evidence="2">
    <location>
        <begin position="1"/>
        <end position="53"/>
    </location>
</feature>
<feature type="binding site" evidence="2">
    <location>
        <position position="12"/>
    </location>
    <ligand>
        <name>Zn(2+)</name>
        <dbReference type="ChEBI" id="CHEBI:29105"/>
    </ligand>
</feature>
<feature type="binding site" evidence="2">
    <location>
        <position position="15"/>
    </location>
    <ligand>
        <name>Zn(2+)</name>
        <dbReference type="ChEBI" id="CHEBI:29105"/>
    </ligand>
</feature>
<feature type="binding site" evidence="2">
    <location>
        <position position="34"/>
    </location>
    <ligand>
        <name>Zn(2+)</name>
        <dbReference type="ChEBI" id="CHEBI:29105"/>
    </ligand>
</feature>
<feature type="binding site" evidence="2">
    <location>
        <position position="37"/>
    </location>
    <ligand>
        <name>Zn(2+)</name>
        <dbReference type="ChEBI" id="CHEBI:29105"/>
    </ligand>
</feature>
<feature type="binding site" evidence="1">
    <location>
        <begin position="116"/>
        <end position="123"/>
    </location>
    <ligand>
        <name>ATP</name>
        <dbReference type="ChEBI" id="CHEBI:30616"/>
    </ligand>
</feature>
<evidence type="ECO:0000255" key="1">
    <source>
        <dbReference type="HAMAP-Rule" id="MF_00175"/>
    </source>
</evidence>
<evidence type="ECO:0000255" key="2">
    <source>
        <dbReference type="PROSITE-ProRule" id="PRU01250"/>
    </source>
</evidence>
<accession>A9KDS7</accession>
<dbReference type="EMBL" id="CP000733">
    <property type="protein sequence ID" value="ABS77193.1"/>
    <property type="molecule type" value="Genomic_DNA"/>
</dbReference>
<dbReference type="RefSeq" id="WP_011996719.1">
    <property type="nucleotide sequence ID" value="NC_009727.1"/>
</dbReference>
<dbReference type="SMR" id="A9KDS7"/>
<dbReference type="KEGG" id="cbd:CBUD_0753"/>
<dbReference type="HOGENOM" id="CLU_014218_8_2_6"/>
<dbReference type="Proteomes" id="UP000008555">
    <property type="component" value="Chromosome"/>
</dbReference>
<dbReference type="GO" id="GO:0009376">
    <property type="term" value="C:HslUV protease complex"/>
    <property type="evidence" value="ECO:0007669"/>
    <property type="project" value="TreeGrafter"/>
</dbReference>
<dbReference type="GO" id="GO:0005524">
    <property type="term" value="F:ATP binding"/>
    <property type="evidence" value="ECO:0007669"/>
    <property type="project" value="UniProtKB-UniRule"/>
</dbReference>
<dbReference type="GO" id="GO:0016887">
    <property type="term" value="F:ATP hydrolysis activity"/>
    <property type="evidence" value="ECO:0007669"/>
    <property type="project" value="InterPro"/>
</dbReference>
<dbReference type="GO" id="GO:0140662">
    <property type="term" value="F:ATP-dependent protein folding chaperone"/>
    <property type="evidence" value="ECO:0007669"/>
    <property type="project" value="InterPro"/>
</dbReference>
<dbReference type="GO" id="GO:0046983">
    <property type="term" value="F:protein dimerization activity"/>
    <property type="evidence" value="ECO:0007669"/>
    <property type="project" value="InterPro"/>
</dbReference>
<dbReference type="GO" id="GO:0051082">
    <property type="term" value="F:unfolded protein binding"/>
    <property type="evidence" value="ECO:0007669"/>
    <property type="project" value="UniProtKB-UniRule"/>
</dbReference>
<dbReference type="GO" id="GO:0008270">
    <property type="term" value="F:zinc ion binding"/>
    <property type="evidence" value="ECO:0007669"/>
    <property type="project" value="InterPro"/>
</dbReference>
<dbReference type="GO" id="GO:0051301">
    <property type="term" value="P:cell division"/>
    <property type="evidence" value="ECO:0007669"/>
    <property type="project" value="TreeGrafter"/>
</dbReference>
<dbReference type="GO" id="GO:0051603">
    <property type="term" value="P:proteolysis involved in protein catabolic process"/>
    <property type="evidence" value="ECO:0007669"/>
    <property type="project" value="TreeGrafter"/>
</dbReference>
<dbReference type="CDD" id="cd19497">
    <property type="entry name" value="RecA-like_ClpX"/>
    <property type="match status" value="1"/>
</dbReference>
<dbReference type="FunFam" id="1.10.8.60:FF:000002">
    <property type="entry name" value="ATP-dependent Clp protease ATP-binding subunit ClpX"/>
    <property type="match status" value="1"/>
</dbReference>
<dbReference type="FunFam" id="3.40.50.300:FF:000005">
    <property type="entry name" value="ATP-dependent Clp protease ATP-binding subunit ClpX"/>
    <property type="match status" value="1"/>
</dbReference>
<dbReference type="Gene3D" id="1.10.8.60">
    <property type="match status" value="1"/>
</dbReference>
<dbReference type="Gene3D" id="6.20.220.10">
    <property type="entry name" value="ClpX chaperone, C4-type zinc finger domain"/>
    <property type="match status" value="1"/>
</dbReference>
<dbReference type="Gene3D" id="3.40.50.300">
    <property type="entry name" value="P-loop containing nucleotide triphosphate hydrolases"/>
    <property type="match status" value="1"/>
</dbReference>
<dbReference type="HAMAP" id="MF_00175">
    <property type="entry name" value="ClpX"/>
    <property type="match status" value="1"/>
</dbReference>
<dbReference type="InterPro" id="IPR003593">
    <property type="entry name" value="AAA+_ATPase"/>
</dbReference>
<dbReference type="InterPro" id="IPR050052">
    <property type="entry name" value="ATP-dep_Clp_protease_ClpX"/>
</dbReference>
<dbReference type="InterPro" id="IPR003959">
    <property type="entry name" value="ATPase_AAA_core"/>
</dbReference>
<dbReference type="InterPro" id="IPR019489">
    <property type="entry name" value="Clp_ATPase_C"/>
</dbReference>
<dbReference type="InterPro" id="IPR004487">
    <property type="entry name" value="Clp_protease_ATP-bd_su_ClpX"/>
</dbReference>
<dbReference type="InterPro" id="IPR046425">
    <property type="entry name" value="ClpX_bact"/>
</dbReference>
<dbReference type="InterPro" id="IPR027417">
    <property type="entry name" value="P-loop_NTPase"/>
</dbReference>
<dbReference type="InterPro" id="IPR010603">
    <property type="entry name" value="Znf_CppX_C4"/>
</dbReference>
<dbReference type="InterPro" id="IPR038366">
    <property type="entry name" value="Znf_CppX_C4_sf"/>
</dbReference>
<dbReference type="NCBIfam" id="TIGR00382">
    <property type="entry name" value="clpX"/>
    <property type="match status" value="1"/>
</dbReference>
<dbReference type="NCBIfam" id="NF003745">
    <property type="entry name" value="PRK05342.1"/>
    <property type="match status" value="1"/>
</dbReference>
<dbReference type="PANTHER" id="PTHR48102:SF7">
    <property type="entry name" value="ATP-DEPENDENT CLP PROTEASE ATP-BINDING SUBUNIT CLPX-LIKE, MITOCHONDRIAL"/>
    <property type="match status" value="1"/>
</dbReference>
<dbReference type="PANTHER" id="PTHR48102">
    <property type="entry name" value="ATP-DEPENDENT CLP PROTEASE ATP-BINDING SUBUNIT CLPX-LIKE, MITOCHONDRIAL-RELATED"/>
    <property type="match status" value="1"/>
</dbReference>
<dbReference type="Pfam" id="PF07724">
    <property type="entry name" value="AAA_2"/>
    <property type="match status" value="1"/>
</dbReference>
<dbReference type="Pfam" id="PF10431">
    <property type="entry name" value="ClpB_D2-small"/>
    <property type="match status" value="1"/>
</dbReference>
<dbReference type="Pfam" id="PF06689">
    <property type="entry name" value="zf-C4_ClpX"/>
    <property type="match status" value="1"/>
</dbReference>
<dbReference type="SMART" id="SM00382">
    <property type="entry name" value="AAA"/>
    <property type="match status" value="1"/>
</dbReference>
<dbReference type="SMART" id="SM01086">
    <property type="entry name" value="ClpB_D2-small"/>
    <property type="match status" value="1"/>
</dbReference>
<dbReference type="SMART" id="SM00994">
    <property type="entry name" value="zf-C4_ClpX"/>
    <property type="match status" value="1"/>
</dbReference>
<dbReference type="SUPFAM" id="SSF57716">
    <property type="entry name" value="Glucocorticoid receptor-like (DNA-binding domain)"/>
    <property type="match status" value="1"/>
</dbReference>
<dbReference type="SUPFAM" id="SSF52540">
    <property type="entry name" value="P-loop containing nucleoside triphosphate hydrolases"/>
    <property type="match status" value="1"/>
</dbReference>
<dbReference type="PROSITE" id="PS51902">
    <property type="entry name" value="CLPX_ZB"/>
    <property type="match status" value="1"/>
</dbReference>
<name>CLPX_COXBN</name>
<reference key="1">
    <citation type="journal article" date="2009" name="Infect. Immun.">
        <title>Comparative genomics reveal extensive transposon-mediated genomic plasticity and diversity among potential effector proteins within the genus Coxiella.</title>
        <authorList>
            <person name="Beare P.A."/>
            <person name="Unsworth N."/>
            <person name="Andoh M."/>
            <person name="Voth D.E."/>
            <person name="Omsland A."/>
            <person name="Gilk S.D."/>
            <person name="Williams K.P."/>
            <person name="Sobral B.W."/>
            <person name="Kupko J.J. III"/>
            <person name="Porcella S.F."/>
            <person name="Samuel J.E."/>
            <person name="Heinzen R.A."/>
        </authorList>
    </citation>
    <scope>NUCLEOTIDE SEQUENCE [LARGE SCALE GENOMIC DNA]</scope>
    <source>
        <strain>Dugway 5J108-111</strain>
    </source>
</reference>
<sequence>MSSDEKLQILYCSFCGKSQHQVRKLIAGPAVFVCNECVDLCNDIIREEEIAQAGGAQKKLPTPPEIHRMLDEYVIGQEFAKKVLSVAVYNHYKRLGNQTKKDSVEISKSNILLIGPTGSGKTLLAQTLAKILDVPFAIADATTLTEAGYVGEDVENIIQKLLQKCNYDVEKAKTGIIYIDEIDKIARKTDSPSLTRDVSGEGVQQALLKLIEGTVASIPPQGGRKHPQQEYLQVDTSNILFICGGAFADLHKIIQRRTDKIGIGFAAEVRPKEDFSREASKLIKQTEPGDLIKYGLIPEFVGRLPIITTLEELDEDALMRILTEPKNALVKQYRKLFEFEGVEIDFREDALKAIAKRAIQQKTGARGLRSIVEHTLLDLMYDLPGVAAGLRKVVIDSGVIDQASPPIFIYHHEKASRKVAQE</sequence>
<organism>
    <name type="scientific">Coxiella burnetii (strain Dugway 5J108-111)</name>
    <dbReference type="NCBI Taxonomy" id="434922"/>
    <lineage>
        <taxon>Bacteria</taxon>
        <taxon>Pseudomonadati</taxon>
        <taxon>Pseudomonadota</taxon>
        <taxon>Gammaproteobacteria</taxon>
        <taxon>Legionellales</taxon>
        <taxon>Coxiellaceae</taxon>
        <taxon>Coxiella</taxon>
    </lineage>
</organism>
<proteinExistence type="inferred from homology"/>
<gene>
    <name evidence="1" type="primary">clpX</name>
    <name type="ordered locus">CBUD_0753</name>
</gene>
<keyword id="KW-0067">ATP-binding</keyword>
<keyword id="KW-0143">Chaperone</keyword>
<keyword id="KW-0479">Metal-binding</keyword>
<keyword id="KW-0547">Nucleotide-binding</keyword>
<keyword id="KW-0862">Zinc</keyword>